<evidence type="ECO:0000255" key="1">
    <source>
        <dbReference type="HAMAP-Rule" id="MF_00109"/>
    </source>
</evidence>
<name>AROK_SHEB9</name>
<feature type="chain" id="PRO_1000075956" description="Shikimate kinase">
    <location>
        <begin position="1"/>
        <end position="171"/>
    </location>
</feature>
<feature type="binding site" evidence="1">
    <location>
        <begin position="14"/>
        <end position="19"/>
    </location>
    <ligand>
        <name>ATP</name>
        <dbReference type="ChEBI" id="CHEBI:30616"/>
    </ligand>
</feature>
<feature type="binding site" evidence="1">
    <location>
        <position position="18"/>
    </location>
    <ligand>
        <name>Mg(2+)</name>
        <dbReference type="ChEBI" id="CHEBI:18420"/>
    </ligand>
</feature>
<feature type="binding site" evidence="1">
    <location>
        <position position="36"/>
    </location>
    <ligand>
        <name>substrate</name>
    </ligand>
</feature>
<feature type="binding site" evidence="1">
    <location>
        <position position="60"/>
    </location>
    <ligand>
        <name>substrate</name>
    </ligand>
</feature>
<feature type="binding site" evidence="1">
    <location>
        <position position="82"/>
    </location>
    <ligand>
        <name>substrate</name>
    </ligand>
</feature>
<feature type="binding site" evidence="1">
    <location>
        <position position="120"/>
    </location>
    <ligand>
        <name>ATP</name>
        <dbReference type="ChEBI" id="CHEBI:30616"/>
    </ligand>
</feature>
<feature type="binding site" evidence="1">
    <location>
        <position position="139"/>
    </location>
    <ligand>
        <name>substrate</name>
    </ligand>
</feature>
<feature type="binding site" evidence="1">
    <location>
        <position position="156"/>
    </location>
    <ligand>
        <name>ATP</name>
        <dbReference type="ChEBI" id="CHEBI:30616"/>
    </ligand>
</feature>
<dbReference type="EC" id="2.7.1.71" evidence="1"/>
<dbReference type="EMBL" id="CP000891">
    <property type="protein sequence ID" value="ABX51360.1"/>
    <property type="molecule type" value="Genomic_DNA"/>
</dbReference>
<dbReference type="RefSeq" id="WP_006083542.1">
    <property type="nucleotide sequence ID" value="NC_009997.1"/>
</dbReference>
<dbReference type="SMR" id="A9L695"/>
<dbReference type="GeneID" id="11775029"/>
<dbReference type="KEGG" id="sbn:Sbal195_4202"/>
<dbReference type="HOGENOM" id="CLU_057607_2_2_6"/>
<dbReference type="UniPathway" id="UPA00053">
    <property type="reaction ID" value="UER00088"/>
</dbReference>
<dbReference type="Proteomes" id="UP000000770">
    <property type="component" value="Chromosome"/>
</dbReference>
<dbReference type="GO" id="GO:0005829">
    <property type="term" value="C:cytosol"/>
    <property type="evidence" value="ECO:0007669"/>
    <property type="project" value="TreeGrafter"/>
</dbReference>
<dbReference type="GO" id="GO:0005524">
    <property type="term" value="F:ATP binding"/>
    <property type="evidence" value="ECO:0007669"/>
    <property type="project" value="UniProtKB-UniRule"/>
</dbReference>
<dbReference type="GO" id="GO:0000287">
    <property type="term" value="F:magnesium ion binding"/>
    <property type="evidence" value="ECO:0007669"/>
    <property type="project" value="UniProtKB-UniRule"/>
</dbReference>
<dbReference type="GO" id="GO:0004765">
    <property type="term" value="F:shikimate kinase activity"/>
    <property type="evidence" value="ECO:0007669"/>
    <property type="project" value="UniProtKB-UniRule"/>
</dbReference>
<dbReference type="GO" id="GO:0008652">
    <property type="term" value="P:amino acid biosynthetic process"/>
    <property type="evidence" value="ECO:0007669"/>
    <property type="project" value="UniProtKB-KW"/>
</dbReference>
<dbReference type="GO" id="GO:0009073">
    <property type="term" value="P:aromatic amino acid family biosynthetic process"/>
    <property type="evidence" value="ECO:0007669"/>
    <property type="project" value="UniProtKB-KW"/>
</dbReference>
<dbReference type="GO" id="GO:0009423">
    <property type="term" value="P:chorismate biosynthetic process"/>
    <property type="evidence" value="ECO:0007669"/>
    <property type="project" value="UniProtKB-UniRule"/>
</dbReference>
<dbReference type="CDD" id="cd00464">
    <property type="entry name" value="SK"/>
    <property type="match status" value="1"/>
</dbReference>
<dbReference type="FunFam" id="3.40.50.300:FF:000099">
    <property type="entry name" value="Shikimate kinase 1"/>
    <property type="match status" value="1"/>
</dbReference>
<dbReference type="Gene3D" id="3.40.50.300">
    <property type="entry name" value="P-loop containing nucleotide triphosphate hydrolases"/>
    <property type="match status" value="1"/>
</dbReference>
<dbReference type="HAMAP" id="MF_00109">
    <property type="entry name" value="Shikimate_kinase"/>
    <property type="match status" value="1"/>
</dbReference>
<dbReference type="InterPro" id="IPR027417">
    <property type="entry name" value="P-loop_NTPase"/>
</dbReference>
<dbReference type="InterPro" id="IPR031322">
    <property type="entry name" value="Shikimate/glucono_kinase"/>
</dbReference>
<dbReference type="InterPro" id="IPR000623">
    <property type="entry name" value="Shikimate_kinase/TSH1"/>
</dbReference>
<dbReference type="InterPro" id="IPR023000">
    <property type="entry name" value="Shikimate_kinase_CS"/>
</dbReference>
<dbReference type="NCBIfam" id="NF003456">
    <property type="entry name" value="PRK05057.1"/>
    <property type="match status" value="1"/>
</dbReference>
<dbReference type="PANTHER" id="PTHR21087">
    <property type="entry name" value="SHIKIMATE KINASE"/>
    <property type="match status" value="1"/>
</dbReference>
<dbReference type="PANTHER" id="PTHR21087:SF16">
    <property type="entry name" value="SHIKIMATE KINASE 1, CHLOROPLASTIC"/>
    <property type="match status" value="1"/>
</dbReference>
<dbReference type="Pfam" id="PF01202">
    <property type="entry name" value="SKI"/>
    <property type="match status" value="1"/>
</dbReference>
<dbReference type="PRINTS" id="PR01100">
    <property type="entry name" value="SHIKIMTKNASE"/>
</dbReference>
<dbReference type="SUPFAM" id="SSF52540">
    <property type="entry name" value="P-loop containing nucleoside triphosphate hydrolases"/>
    <property type="match status" value="1"/>
</dbReference>
<dbReference type="PROSITE" id="PS01128">
    <property type="entry name" value="SHIKIMATE_KINASE"/>
    <property type="match status" value="1"/>
</dbReference>
<protein>
    <recommendedName>
        <fullName evidence="1">Shikimate kinase</fullName>
        <shortName evidence="1">SK</shortName>
        <ecNumber evidence="1">2.7.1.71</ecNumber>
    </recommendedName>
</protein>
<gene>
    <name evidence="1" type="primary">aroK</name>
    <name type="ordered locus">Sbal195_4202</name>
</gene>
<organism>
    <name type="scientific">Shewanella baltica (strain OS195)</name>
    <dbReference type="NCBI Taxonomy" id="399599"/>
    <lineage>
        <taxon>Bacteria</taxon>
        <taxon>Pseudomonadati</taxon>
        <taxon>Pseudomonadota</taxon>
        <taxon>Gammaproteobacteria</taxon>
        <taxon>Alteromonadales</taxon>
        <taxon>Shewanellaceae</taxon>
        <taxon>Shewanella</taxon>
    </lineage>
</organism>
<sequence length="171" mass="19203">MAEKRNIFLVGPMGAGKSTIGRHLAQMLHLEFHDSDQEIEQRTGADIAWVFDVEGEEGFRRREAQVIADLSEKQGIVLATGGGSVQSKDIRNHLSARGIVVYLETTIDKQVARTQRDKRRPLLQVDDPREVLENLAEIRNPLYEEIADVIVKTDDQSAKIVANQIIEQLGF</sequence>
<keyword id="KW-0028">Amino-acid biosynthesis</keyword>
<keyword id="KW-0057">Aromatic amino acid biosynthesis</keyword>
<keyword id="KW-0067">ATP-binding</keyword>
<keyword id="KW-0963">Cytoplasm</keyword>
<keyword id="KW-0418">Kinase</keyword>
<keyword id="KW-0460">Magnesium</keyword>
<keyword id="KW-0479">Metal-binding</keyword>
<keyword id="KW-0547">Nucleotide-binding</keyword>
<keyword id="KW-0808">Transferase</keyword>
<accession>A9L695</accession>
<reference key="1">
    <citation type="submission" date="2007-11" db="EMBL/GenBank/DDBJ databases">
        <title>Complete sequence of chromosome of Shewanella baltica OS195.</title>
        <authorList>
            <consortium name="US DOE Joint Genome Institute"/>
            <person name="Copeland A."/>
            <person name="Lucas S."/>
            <person name="Lapidus A."/>
            <person name="Barry K."/>
            <person name="Glavina del Rio T."/>
            <person name="Dalin E."/>
            <person name="Tice H."/>
            <person name="Pitluck S."/>
            <person name="Chain P."/>
            <person name="Malfatti S."/>
            <person name="Shin M."/>
            <person name="Vergez L."/>
            <person name="Schmutz J."/>
            <person name="Larimer F."/>
            <person name="Land M."/>
            <person name="Hauser L."/>
            <person name="Kyrpides N."/>
            <person name="Kim E."/>
            <person name="Brettar I."/>
            <person name="Rodrigues J."/>
            <person name="Konstantinidis K."/>
            <person name="Klappenbach J."/>
            <person name="Hofle M."/>
            <person name="Tiedje J."/>
            <person name="Richardson P."/>
        </authorList>
    </citation>
    <scope>NUCLEOTIDE SEQUENCE [LARGE SCALE GENOMIC DNA]</scope>
    <source>
        <strain>OS195</strain>
    </source>
</reference>
<proteinExistence type="inferred from homology"/>
<comment type="function">
    <text evidence="1">Catalyzes the specific phosphorylation of the 3-hydroxyl group of shikimic acid using ATP as a cosubstrate.</text>
</comment>
<comment type="catalytic activity">
    <reaction evidence="1">
        <text>shikimate + ATP = 3-phosphoshikimate + ADP + H(+)</text>
        <dbReference type="Rhea" id="RHEA:13121"/>
        <dbReference type="ChEBI" id="CHEBI:15378"/>
        <dbReference type="ChEBI" id="CHEBI:30616"/>
        <dbReference type="ChEBI" id="CHEBI:36208"/>
        <dbReference type="ChEBI" id="CHEBI:145989"/>
        <dbReference type="ChEBI" id="CHEBI:456216"/>
        <dbReference type="EC" id="2.7.1.71"/>
    </reaction>
</comment>
<comment type="cofactor">
    <cofactor evidence="1">
        <name>Mg(2+)</name>
        <dbReference type="ChEBI" id="CHEBI:18420"/>
    </cofactor>
    <text evidence="1">Binds 1 Mg(2+) ion per subunit.</text>
</comment>
<comment type="pathway">
    <text evidence="1">Metabolic intermediate biosynthesis; chorismate biosynthesis; chorismate from D-erythrose 4-phosphate and phosphoenolpyruvate: step 5/7.</text>
</comment>
<comment type="subunit">
    <text evidence="1">Monomer.</text>
</comment>
<comment type="subcellular location">
    <subcellularLocation>
        <location evidence="1">Cytoplasm</location>
    </subcellularLocation>
</comment>
<comment type="similarity">
    <text evidence="1">Belongs to the shikimate kinase family.</text>
</comment>